<gene>
    <name evidence="1" type="primary">pfkA</name>
    <name type="ordered locus">SERP1262</name>
</gene>
<comment type="function">
    <text evidence="1">Catalyzes the phosphorylation of D-fructose 6-phosphate to fructose 1,6-bisphosphate by ATP, the first committing step of glycolysis.</text>
</comment>
<comment type="catalytic activity">
    <reaction evidence="1">
        <text>beta-D-fructose 6-phosphate + ATP = beta-D-fructose 1,6-bisphosphate + ADP + H(+)</text>
        <dbReference type="Rhea" id="RHEA:16109"/>
        <dbReference type="ChEBI" id="CHEBI:15378"/>
        <dbReference type="ChEBI" id="CHEBI:30616"/>
        <dbReference type="ChEBI" id="CHEBI:32966"/>
        <dbReference type="ChEBI" id="CHEBI:57634"/>
        <dbReference type="ChEBI" id="CHEBI:456216"/>
        <dbReference type="EC" id="2.7.1.11"/>
    </reaction>
</comment>
<comment type="cofactor">
    <cofactor evidence="1">
        <name>Mg(2+)</name>
        <dbReference type="ChEBI" id="CHEBI:18420"/>
    </cofactor>
</comment>
<comment type="activity regulation">
    <text evidence="1">Allosterically activated by ADP and other diphosphonucleosides, and allosterically inhibited by phosphoenolpyruvate.</text>
</comment>
<comment type="pathway">
    <text evidence="1">Carbohydrate degradation; glycolysis; D-glyceraldehyde 3-phosphate and glycerone phosphate from D-glucose: step 3/4.</text>
</comment>
<comment type="subunit">
    <text evidence="1">Homotetramer.</text>
</comment>
<comment type="subcellular location">
    <subcellularLocation>
        <location evidence="1">Cytoplasm</location>
    </subcellularLocation>
</comment>
<comment type="similarity">
    <text evidence="1">Belongs to the phosphofructokinase type A (PFKA) family. ATP-dependent PFK group I subfamily. Prokaryotic clade 'B1' sub-subfamily.</text>
</comment>
<keyword id="KW-0021">Allosteric enzyme</keyword>
<keyword id="KW-0067">ATP-binding</keyword>
<keyword id="KW-0963">Cytoplasm</keyword>
<keyword id="KW-0324">Glycolysis</keyword>
<keyword id="KW-0418">Kinase</keyword>
<keyword id="KW-0460">Magnesium</keyword>
<keyword id="KW-0479">Metal-binding</keyword>
<keyword id="KW-0547">Nucleotide-binding</keyword>
<keyword id="KW-1185">Reference proteome</keyword>
<keyword id="KW-0808">Transferase</keyword>
<sequence>MKKIAVLTSGGDSPGMNAAVRAVTRTAIYNNIEVYGVYQGYQGLLDDDIHKLELGSVGDTIQRGGTFLFSARCPQFKEEDVRKKAIENLRKRGIEGLVVIGGDGSYRGAQRISEECKEIQTIGIPGTIDNDINGTDFTIGFDTALNTIIESVDKIRDTASSHARTFIVEVMGRDCGDLALWAGLSVGAETIVLPEVNTDIKDVAEKIEQGIKRGKKHSIVMVAEGCMSGQECADELTKYINIDTRVSVLGHIQRGGSPSGADRVLASRLGGYAVELLKQGETAKGVGIRNNQLTSTPFDEIFAESNRKFNSQMYELAKELSI</sequence>
<dbReference type="EC" id="2.7.1.11" evidence="1"/>
<dbReference type="EMBL" id="CP000029">
    <property type="protein sequence ID" value="AAW54634.1"/>
    <property type="molecule type" value="Genomic_DNA"/>
</dbReference>
<dbReference type="RefSeq" id="WP_002505771.1">
    <property type="nucleotide sequence ID" value="NC_002976.3"/>
</dbReference>
<dbReference type="SMR" id="Q5HNK6"/>
<dbReference type="STRING" id="176279.SERP1262"/>
<dbReference type="KEGG" id="ser:SERP1262"/>
<dbReference type="eggNOG" id="COG0205">
    <property type="taxonomic scope" value="Bacteria"/>
</dbReference>
<dbReference type="HOGENOM" id="CLU_020655_0_1_9"/>
<dbReference type="UniPathway" id="UPA00109">
    <property type="reaction ID" value="UER00182"/>
</dbReference>
<dbReference type="Proteomes" id="UP000000531">
    <property type="component" value="Chromosome"/>
</dbReference>
<dbReference type="GO" id="GO:0005945">
    <property type="term" value="C:6-phosphofructokinase complex"/>
    <property type="evidence" value="ECO:0007669"/>
    <property type="project" value="TreeGrafter"/>
</dbReference>
<dbReference type="GO" id="GO:0003872">
    <property type="term" value="F:6-phosphofructokinase activity"/>
    <property type="evidence" value="ECO:0007669"/>
    <property type="project" value="UniProtKB-UniRule"/>
</dbReference>
<dbReference type="GO" id="GO:0016208">
    <property type="term" value="F:AMP binding"/>
    <property type="evidence" value="ECO:0007669"/>
    <property type="project" value="TreeGrafter"/>
</dbReference>
<dbReference type="GO" id="GO:0005524">
    <property type="term" value="F:ATP binding"/>
    <property type="evidence" value="ECO:0007669"/>
    <property type="project" value="UniProtKB-KW"/>
</dbReference>
<dbReference type="GO" id="GO:0070095">
    <property type="term" value="F:fructose-6-phosphate binding"/>
    <property type="evidence" value="ECO:0007669"/>
    <property type="project" value="TreeGrafter"/>
</dbReference>
<dbReference type="GO" id="GO:0042802">
    <property type="term" value="F:identical protein binding"/>
    <property type="evidence" value="ECO:0007669"/>
    <property type="project" value="TreeGrafter"/>
</dbReference>
<dbReference type="GO" id="GO:0046872">
    <property type="term" value="F:metal ion binding"/>
    <property type="evidence" value="ECO:0007669"/>
    <property type="project" value="UniProtKB-KW"/>
</dbReference>
<dbReference type="GO" id="GO:0048029">
    <property type="term" value="F:monosaccharide binding"/>
    <property type="evidence" value="ECO:0007669"/>
    <property type="project" value="TreeGrafter"/>
</dbReference>
<dbReference type="GO" id="GO:0061621">
    <property type="term" value="P:canonical glycolysis"/>
    <property type="evidence" value="ECO:0007669"/>
    <property type="project" value="TreeGrafter"/>
</dbReference>
<dbReference type="GO" id="GO:0030388">
    <property type="term" value="P:fructose 1,6-bisphosphate metabolic process"/>
    <property type="evidence" value="ECO:0007669"/>
    <property type="project" value="TreeGrafter"/>
</dbReference>
<dbReference type="GO" id="GO:0006002">
    <property type="term" value="P:fructose 6-phosphate metabolic process"/>
    <property type="evidence" value="ECO:0007669"/>
    <property type="project" value="InterPro"/>
</dbReference>
<dbReference type="FunFam" id="3.40.50.450:FF:000001">
    <property type="entry name" value="ATP-dependent 6-phosphofructokinase"/>
    <property type="match status" value="1"/>
</dbReference>
<dbReference type="FunFam" id="3.40.50.460:FF:000002">
    <property type="entry name" value="ATP-dependent 6-phosphofructokinase"/>
    <property type="match status" value="1"/>
</dbReference>
<dbReference type="Gene3D" id="3.40.50.450">
    <property type="match status" value="1"/>
</dbReference>
<dbReference type="Gene3D" id="3.40.50.460">
    <property type="entry name" value="Phosphofructokinase domain"/>
    <property type="match status" value="1"/>
</dbReference>
<dbReference type="HAMAP" id="MF_00339">
    <property type="entry name" value="Phosphofructokinase_I_B1"/>
    <property type="match status" value="1"/>
</dbReference>
<dbReference type="InterPro" id="IPR022953">
    <property type="entry name" value="ATP_PFK"/>
</dbReference>
<dbReference type="InterPro" id="IPR012003">
    <property type="entry name" value="ATP_PFK_prok-type"/>
</dbReference>
<dbReference type="InterPro" id="IPR012828">
    <property type="entry name" value="PFKA_ATP_prok"/>
</dbReference>
<dbReference type="InterPro" id="IPR015912">
    <property type="entry name" value="Phosphofructokinase_CS"/>
</dbReference>
<dbReference type="InterPro" id="IPR000023">
    <property type="entry name" value="Phosphofructokinase_dom"/>
</dbReference>
<dbReference type="InterPro" id="IPR035966">
    <property type="entry name" value="PKF_sf"/>
</dbReference>
<dbReference type="NCBIfam" id="TIGR02482">
    <property type="entry name" value="PFKA_ATP"/>
    <property type="match status" value="1"/>
</dbReference>
<dbReference type="NCBIfam" id="NF002872">
    <property type="entry name" value="PRK03202.1"/>
    <property type="match status" value="1"/>
</dbReference>
<dbReference type="PANTHER" id="PTHR13697:SF4">
    <property type="entry name" value="ATP-DEPENDENT 6-PHOSPHOFRUCTOKINASE"/>
    <property type="match status" value="1"/>
</dbReference>
<dbReference type="PANTHER" id="PTHR13697">
    <property type="entry name" value="PHOSPHOFRUCTOKINASE"/>
    <property type="match status" value="1"/>
</dbReference>
<dbReference type="Pfam" id="PF00365">
    <property type="entry name" value="PFK"/>
    <property type="match status" value="1"/>
</dbReference>
<dbReference type="PIRSF" id="PIRSF000532">
    <property type="entry name" value="ATP_PFK_prok"/>
    <property type="match status" value="1"/>
</dbReference>
<dbReference type="PRINTS" id="PR00476">
    <property type="entry name" value="PHFRCTKINASE"/>
</dbReference>
<dbReference type="SUPFAM" id="SSF53784">
    <property type="entry name" value="Phosphofructokinase"/>
    <property type="match status" value="1"/>
</dbReference>
<dbReference type="PROSITE" id="PS00433">
    <property type="entry name" value="PHOSPHOFRUCTOKINASE"/>
    <property type="match status" value="1"/>
</dbReference>
<name>PFKA_STAEQ</name>
<feature type="chain" id="PRO_0000111983" description="ATP-dependent 6-phosphofructokinase">
    <location>
        <begin position="1"/>
        <end position="322"/>
    </location>
</feature>
<feature type="active site" description="Proton acceptor" evidence="1">
    <location>
        <position position="129"/>
    </location>
</feature>
<feature type="binding site" evidence="1">
    <location>
        <position position="11"/>
    </location>
    <ligand>
        <name>ATP</name>
        <dbReference type="ChEBI" id="CHEBI:30616"/>
    </ligand>
</feature>
<feature type="binding site" evidence="1">
    <location>
        <begin position="21"/>
        <end position="25"/>
    </location>
    <ligand>
        <name>ADP</name>
        <dbReference type="ChEBI" id="CHEBI:456216"/>
        <note>allosteric activator; ligand shared between dimeric partners</note>
    </ligand>
</feature>
<feature type="binding site" evidence="1">
    <location>
        <begin position="72"/>
        <end position="73"/>
    </location>
    <ligand>
        <name>ATP</name>
        <dbReference type="ChEBI" id="CHEBI:30616"/>
    </ligand>
</feature>
<feature type="binding site" evidence="1">
    <location>
        <begin position="102"/>
        <end position="105"/>
    </location>
    <ligand>
        <name>ATP</name>
        <dbReference type="ChEBI" id="CHEBI:30616"/>
    </ligand>
</feature>
<feature type="binding site" evidence="1">
    <location>
        <position position="103"/>
    </location>
    <ligand>
        <name>Mg(2+)</name>
        <dbReference type="ChEBI" id="CHEBI:18420"/>
        <note>catalytic</note>
    </ligand>
</feature>
<feature type="binding site" description="in other chain" evidence="1">
    <location>
        <begin position="127"/>
        <end position="129"/>
    </location>
    <ligand>
        <name>substrate</name>
        <note>ligand shared between dimeric partners</note>
    </ligand>
</feature>
<feature type="binding site" description="in other chain" evidence="1">
    <location>
        <position position="156"/>
    </location>
    <ligand>
        <name>ADP</name>
        <dbReference type="ChEBI" id="CHEBI:456216"/>
        <note>allosteric activator; ligand shared between dimeric partners</note>
    </ligand>
</feature>
<feature type="binding site" evidence="1">
    <location>
        <position position="164"/>
    </location>
    <ligand>
        <name>substrate</name>
        <note>ligand shared between dimeric partners</note>
    </ligand>
</feature>
<feature type="binding site" description="in other chain" evidence="1">
    <location>
        <begin position="171"/>
        <end position="173"/>
    </location>
    <ligand>
        <name>substrate</name>
        <note>ligand shared between dimeric partners</note>
    </ligand>
</feature>
<feature type="binding site" description="in other chain" evidence="1">
    <location>
        <begin position="187"/>
        <end position="189"/>
    </location>
    <ligand>
        <name>ADP</name>
        <dbReference type="ChEBI" id="CHEBI:456216"/>
        <note>allosteric activator; ligand shared between dimeric partners</note>
    </ligand>
</feature>
<feature type="binding site" description="in other chain" evidence="1">
    <location>
        <position position="213"/>
    </location>
    <ligand>
        <name>ADP</name>
        <dbReference type="ChEBI" id="CHEBI:456216"/>
        <note>allosteric activator; ligand shared between dimeric partners</note>
    </ligand>
</feature>
<feature type="binding site" description="in other chain" evidence="1">
    <location>
        <begin position="215"/>
        <end position="217"/>
    </location>
    <ligand>
        <name>ADP</name>
        <dbReference type="ChEBI" id="CHEBI:456216"/>
        <note>allosteric activator; ligand shared between dimeric partners</note>
    </ligand>
</feature>
<feature type="binding site" description="in other chain" evidence="1">
    <location>
        <position position="224"/>
    </location>
    <ligand>
        <name>substrate</name>
        <note>ligand shared between dimeric partners</note>
    </ligand>
</feature>
<feature type="binding site" evidence="1">
    <location>
        <position position="245"/>
    </location>
    <ligand>
        <name>substrate</name>
        <note>ligand shared between dimeric partners</note>
    </ligand>
</feature>
<feature type="binding site" description="in other chain" evidence="1">
    <location>
        <begin position="251"/>
        <end position="254"/>
    </location>
    <ligand>
        <name>substrate</name>
        <note>ligand shared between dimeric partners</note>
    </ligand>
</feature>
<protein>
    <recommendedName>
        <fullName evidence="1">ATP-dependent 6-phosphofructokinase</fullName>
        <shortName evidence="1">ATP-PFK</shortName>
        <shortName evidence="1">Phosphofructokinase</shortName>
        <ecNumber evidence="1">2.7.1.11</ecNumber>
    </recommendedName>
    <alternativeName>
        <fullName evidence="1">Phosphohexokinase</fullName>
    </alternativeName>
</protein>
<proteinExistence type="inferred from homology"/>
<evidence type="ECO:0000255" key="1">
    <source>
        <dbReference type="HAMAP-Rule" id="MF_00339"/>
    </source>
</evidence>
<reference key="1">
    <citation type="journal article" date="2005" name="J. Bacteriol.">
        <title>Insights on evolution of virulence and resistance from the complete genome analysis of an early methicillin-resistant Staphylococcus aureus strain and a biofilm-producing methicillin-resistant Staphylococcus epidermidis strain.</title>
        <authorList>
            <person name="Gill S.R."/>
            <person name="Fouts D.E."/>
            <person name="Archer G.L."/>
            <person name="Mongodin E.F."/>
            <person name="DeBoy R.T."/>
            <person name="Ravel J."/>
            <person name="Paulsen I.T."/>
            <person name="Kolonay J.F."/>
            <person name="Brinkac L.M."/>
            <person name="Beanan M.J."/>
            <person name="Dodson R.J."/>
            <person name="Daugherty S.C."/>
            <person name="Madupu R."/>
            <person name="Angiuoli S.V."/>
            <person name="Durkin A.S."/>
            <person name="Haft D.H."/>
            <person name="Vamathevan J.J."/>
            <person name="Khouri H."/>
            <person name="Utterback T.R."/>
            <person name="Lee C."/>
            <person name="Dimitrov G."/>
            <person name="Jiang L."/>
            <person name="Qin H."/>
            <person name="Weidman J."/>
            <person name="Tran K."/>
            <person name="Kang K.H."/>
            <person name="Hance I.R."/>
            <person name="Nelson K.E."/>
            <person name="Fraser C.M."/>
        </authorList>
    </citation>
    <scope>NUCLEOTIDE SEQUENCE [LARGE SCALE GENOMIC DNA]</scope>
    <source>
        <strain>ATCC 35984 / DSM 28319 / BCRC 17069 / CCUG 31568 / BM 3577 / RP62A</strain>
    </source>
</reference>
<accession>Q5HNK6</accession>
<organism>
    <name type="scientific">Staphylococcus epidermidis (strain ATCC 35984 / DSM 28319 / BCRC 17069 / CCUG 31568 / BM 3577 / RP62A)</name>
    <dbReference type="NCBI Taxonomy" id="176279"/>
    <lineage>
        <taxon>Bacteria</taxon>
        <taxon>Bacillati</taxon>
        <taxon>Bacillota</taxon>
        <taxon>Bacilli</taxon>
        <taxon>Bacillales</taxon>
        <taxon>Staphylococcaceae</taxon>
        <taxon>Staphylococcus</taxon>
    </lineage>
</organism>